<evidence type="ECO:0000250" key="1"/>
<evidence type="ECO:0000250" key="2">
    <source>
        <dbReference type="UniProtKB" id="P00157"/>
    </source>
</evidence>
<evidence type="ECO:0000255" key="3">
    <source>
        <dbReference type="PROSITE-ProRule" id="PRU00967"/>
    </source>
</evidence>
<evidence type="ECO:0000255" key="4">
    <source>
        <dbReference type="PROSITE-ProRule" id="PRU00968"/>
    </source>
</evidence>
<feature type="chain" id="PRO_0000254846" description="Cytochrome b">
    <location>
        <begin position="1"/>
        <end position="379"/>
    </location>
</feature>
<feature type="transmembrane region" description="Helical" evidence="2">
    <location>
        <begin position="33"/>
        <end position="53"/>
    </location>
</feature>
<feature type="transmembrane region" description="Helical" evidence="2">
    <location>
        <begin position="77"/>
        <end position="98"/>
    </location>
</feature>
<feature type="transmembrane region" description="Helical" evidence="2">
    <location>
        <begin position="113"/>
        <end position="133"/>
    </location>
</feature>
<feature type="transmembrane region" description="Helical" evidence="2">
    <location>
        <begin position="178"/>
        <end position="198"/>
    </location>
</feature>
<feature type="transmembrane region" description="Helical" evidence="2">
    <location>
        <begin position="226"/>
        <end position="246"/>
    </location>
</feature>
<feature type="transmembrane region" description="Helical" evidence="2">
    <location>
        <begin position="288"/>
        <end position="308"/>
    </location>
</feature>
<feature type="transmembrane region" description="Helical" evidence="2">
    <location>
        <begin position="320"/>
        <end position="340"/>
    </location>
</feature>
<feature type="transmembrane region" description="Helical" evidence="2">
    <location>
        <begin position="347"/>
        <end position="367"/>
    </location>
</feature>
<feature type="binding site" description="axial binding residue" evidence="2">
    <location>
        <position position="83"/>
    </location>
    <ligand>
        <name>heme b</name>
        <dbReference type="ChEBI" id="CHEBI:60344"/>
        <label>b562</label>
    </ligand>
    <ligandPart>
        <name>Fe</name>
        <dbReference type="ChEBI" id="CHEBI:18248"/>
    </ligandPart>
</feature>
<feature type="binding site" description="axial binding residue" evidence="2">
    <location>
        <position position="97"/>
    </location>
    <ligand>
        <name>heme b</name>
        <dbReference type="ChEBI" id="CHEBI:60344"/>
        <label>b566</label>
    </ligand>
    <ligandPart>
        <name>Fe</name>
        <dbReference type="ChEBI" id="CHEBI:18248"/>
    </ligandPart>
</feature>
<feature type="binding site" description="axial binding residue" evidence="2">
    <location>
        <position position="182"/>
    </location>
    <ligand>
        <name>heme b</name>
        <dbReference type="ChEBI" id="CHEBI:60344"/>
        <label>b562</label>
    </ligand>
    <ligandPart>
        <name>Fe</name>
        <dbReference type="ChEBI" id="CHEBI:18248"/>
    </ligandPart>
</feature>
<feature type="binding site" description="axial binding residue" evidence="2">
    <location>
        <position position="196"/>
    </location>
    <ligand>
        <name>heme b</name>
        <dbReference type="ChEBI" id="CHEBI:60344"/>
        <label>b566</label>
    </ligand>
    <ligandPart>
        <name>Fe</name>
        <dbReference type="ChEBI" id="CHEBI:18248"/>
    </ligandPart>
</feature>
<feature type="binding site" evidence="2">
    <location>
        <position position="201"/>
    </location>
    <ligand>
        <name>a ubiquinone</name>
        <dbReference type="ChEBI" id="CHEBI:16389"/>
    </ligand>
</feature>
<geneLocation type="mitochondrion"/>
<organism>
    <name type="scientific">Plecotus auritus</name>
    <name type="common">Long-eared bat</name>
    <dbReference type="NCBI Taxonomy" id="61862"/>
    <lineage>
        <taxon>Eukaryota</taxon>
        <taxon>Metazoa</taxon>
        <taxon>Chordata</taxon>
        <taxon>Craniata</taxon>
        <taxon>Vertebrata</taxon>
        <taxon>Euteleostomi</taxon>
        <taxon>Mammalia</taxon>
        <taxon>Eutheria</taxon>
        <taxon>Laurasiatheria</taxon>
        <taxon>Chiroptera</taxon>
        <taxon>Yangochiroptera</taxon>
        <taxon>Vespertilionidae</taxon>
        <taxon>Plecotus</taxon>
    </lineage>
</organism>
<protein>
    <recommendedName>
        <fullName>Cytochrome b</fullName>
    </recommendedName>
    <alternativeName>
        <fullName>Complex III subunit 3</fullName>
    </alternativeName>
    <alternativeName>
        <fullName>Complex III subunit III</fullName>
    </alternativeName>
    <alternativeName>
        <fullName>Cytochrome b-c1 complex subunit 3</fullName>
    </alternativeName>
    <alternativeName>
        <fullName>Ubiquinol-cytochrome-c reductase complex cytochrome b subunit</fullName>
    </alternativeName>
</protein>
<proteinExistence type="inferred from homology"/>
<sequence>MTNIRKSHPLMKIINNSLIDLPAPSNISSWWNFGSLLGICLALQILTGLFLAMHYTSDTTTAFSSVTHICRDVNYGWVLRYLHANGASMFFICLYLHIGRGLYYGSYLYMETWNVGVILLFAVMATAFMGYVLPWGQMSFWGATVITNLLSAIPYVGTNLVEWIWGGFSVDKATLTRFFAFHFLFPFIISAMVMGHLLFLHETGSNNPTGIPSNMDMIPFHPYYTIKDILGLLVMIMSLLALVLFSPDMLGDPDNYSPANPLNTPPHIKPEWYFLFAYAILRSIPNKLGGVLALVLSILILIIIPLLHTSKQRSMTFRPLSQCMFWLLVADLLALTWIGGQPVEHPYIIIGQLASILYFLIITTLMPLAGLLENRLLKW</sequence>
<reference key="1">
    <citation type="journal article" date="2003" name="Genes Genet. Syst.">
        <title>Molecular phylogeny of Japanese Rhinolophidae based on variations in the complete sequence of the mitochondrial cytochrome b gene.</title>
        <authorList>
            <person name="Sakai T."/>
            <person name="Kikkawa Y."/>
            <person name="Tuchiya K."/>
            <person name="Harada M."/>
            <person name="Kanoe M."/>
            <person name="Yoshiyuki M."/>
            <person name="Yonekawa H."/>
        </authorList>
    </citation>
    <scope>NUCLEOTIDE SEQUENCE [GENOMIC DNA]</scope>
</reference>
<reference key="2">
    <citation type="submission" date="2004-06" db="EMBL/GenBank/DDBJ databases">
        <title>Phylogeography and systematics of the steppe whiskered bat Myotis aurascens Kuzyakin, 1935 (Chiroptera, Vespertilionidae).</title>
        <authorList>
            <person name="Tsytsulina K."/>
            <person name="Dick M.L."/>
            <person name="Masuda R."/>
            <person name="Maeda K."/>
        </authorList>
    </citation>
    <scope>NUCLEOTIDE SEQUENCE [GENOMIC DNA]</scope>
    <source>
        <strain>Isolate Pl80</strain>
    </source>
</reference>
<name>CYB_PLEAU</name>
<keyword id="KW-0249">Electron transport</keyword>
<keyword id="KW-0349">Heme</keyword>
<keyword id="KW-0408">Iron</keyword>
<keyword id="KW-0472">Membrane</keyword>
<keyword id="KW-0479">Metal-binding</keyword>
<keyword id="KW-0496">Mitochondrion</keyword>
<keyword id="KW-0999">Mitochondrion inner membrane</keyword>
<keyword id="KW-0679">Respiratory chain</keyword>
<keyword id="KW-0812">Transmembrane</keyword>
<keyword id="KW-1133">Transmembrane helix</keyword>
<keyword id="KW-0813">Transport</keyword>
<keyword id="KW-0830">Ubiquinone</keyword>
<comment type="function">
    <text evidence="2">Component of the ubiquinol-cytochrome c reductase complex (complex III or cytochrome b-c1 complex) that is part of the mitochondrial respiratory chain. The b-c1 complex mediates electron transfer from ubiquinol to cytochrome c. Contributes to the generation of a proton gradient across the mitochondrial membrane that is then used for ATP synthesis.</text>
</comment>
<comment type="cofactor">
    <cofactor evidence="2">
        <name>heme b</name>
        <dbReference type="ChEBI" id="CHEBI:60344"/>
    </cofactor>
    <text evidence="2">Binds 2 heme b groups non-covalently.</text>
</comment>
<comment type="subunit">
    <text evidence="2">The cytochrome bc1 complex contains 11 subunits: 3 respiratory subunits (MT-CYB, CYC1 and UQCRFS1), 2 core proteins (UQCRC1 and UQCRC2) and 6 low-molecular weight proteins (UQCRH/QCR6, UQCRB/QCR7, UQCRQ/QCR8, UQCR10/QCR9, UQCR11/QCR10 and a cleavage product of UQCRFS1). This cytochrome bc1 complex then forms a dimer.</text>
</comment>
<comment type="subcellular location">
    <subcellularLocation>
        <location evidence="2">Mitochondrion inner membrane</location>
        <topology evidence="2">Multi-pass membrane protein</topology>
    </subcellularLocation>
</comment>
<comment type="miscellaneous">
    <text evidence="1">Heme 1 (or BL or b562) is low-potential and absorbs at about 562 nm, and heme 2 (or BH or b566) is high-potential and absorbs at about 566 nm.</text>
</comment>
<comment type="similarity">
    <text evidence="3 4">Belongs to the cytochrome b family.</text>
</comment>
<comment type="caution">
    <text evidence="2">The full-length protein contains only eight transmembrane helices, not nine as predicted by bioinformatics tools.</text>
</comment>
<gene>
    <name type="primary">MT-CYB</name>
    <name type="synonym">COB</name>
    <name type="synonym">CYTB</name>
    <name type="synonym">MTCYB</name>
</gene>
<dbReference type="EMBL" id="AB085734">
    <property type="protein sequence ID" value="BAC16628.1"/>
    <property type="molecule type" value="Genomic_DNA"/>
</dbReference>
<dbReference type="EMBL" id="AY665169">
    <property type="protein sequence ID" value="AAW65763.1"/>
    <property type="molecule type" value="Genomic_DNA"/>
</dbReference>
<dbReference type="SMR" id="Q8HQF0"/>
<dbReference type="GO" id="GO:0005743">
    <property type="term" value="C:mitochondrial inner membrane"/>
    <property type="evidence" value="ECO:0007669"/>
    <property type="project" value="UniProtKB-SubCell"/>
</dbReference>
<dbReference type="GO" id="GO:0045275">
    <property type="term" value="C:respiratory chain complex III"/>
    <property type="evidence" value="ECO:0007669"/>
    <property type="project" value="InterPro"/>
</dbReference>
<dbReference type="GO" id="GO:0046872">
    <property type="term" value="F:metal ion binding"/>
    <property type="evidence" value="ECO:0007669"/>
    <property type="project" value="UniProtKB-KW"/>
</dbReference>
<dbReference type="GO" id="GO:0008121">
    <property type="term" value="F:ubiquinol-cytochrome-c reductase activity"/>
    <property type="evidence" value="ECO:0007669"/>
    <property type="project" value="InterPro"/>
</dbReference>
<dbReference type="GO" id="GO:0006122">
    <property type="term" value="P:mitochondrial electron transport, ubiquinol to cytochrome c"/>
    <property type="evidence" value="ECO:0007669"/>
    <property type="project" value="TreeGrafter"/>
</dbReference>
<dbReference type="CDD" id="cd00290">
    <property type="entry name" value="cytochrome_b_C"/>
    <property type="match status" value="1"/>
</dbReference>
<dbReference type="CDD" id="cd00284">
    <property type="entry name" value="Cytochrome_b_N"/>
    <property type="match status" value="1"/>
</dbReference>
<dbReference type="FunFam" id="1.20.810.10:FF:000002">
    <property type="entry name" value="Cytochrome b"/>
    <property type="match status" value="1"/>
</dbReference>
<dbReference type="Gene3D" id="1.20.810.10">
    <property type="entry name" value="Cytochrome Bc1 Complex, Chain C"/>
    <property type="match status" value="1"/>
</dbReference>
<dbReference type="InterPro" id="IPR005798">
    <property type="entry name" value="Cyt_b/b6_C"/>
</dbReference>
<dbReference type="InterPro" id="IPR036150">
    <property type="entry name" value="Cyt_b/b6_C_sf"/>
</dbReference>
<dbReference type="InterPro" id="IPR005797">
    <property type="entry name" value="Cyt_b/b6_N"/>
</dbReference>
<dbReference type="InterPro" id="IPR027387">
    <property type="entry name" value="Cytb/b6-like_sf"/>
</dbReference>
<dbReference type="InterPro" id="IPR030689">
    <property type="entry name" value="Cytochrome_b"/>
</dbReference>
<dbReference type="InterPro" id="IPR048260">
    <property type="entry name" value="Cytochrome_b_C_euk/bac"/>
</dbReference>
<dbReference type="InterPro" id="IPR048259">
    <property type="entry name" value="Cytochrome_b_N_euk/bac"/>
</dbReference>
<dbReference type="InterPro" id="IPR016174">
    <property type="entry name" value="Di-haem_cyt_TM"/>
</dbReference>
<dbReference type="PANTHER" id="PTHR19271">
    <property type="entry name" value="CYTOCHROME B"/>
    <property type="match status" value="1"/>
</dbReference>
<dbReference type="PANTHER" id="PTHR19271:SF16">
    <property type="entry name" value="CYTOCHROME B"/>
    <property type="match status" value="1"/>
</dbReference>
<dbReference type="Pfam" id="PF00032">
    <property type="entry name" value="Cytochrom_B_C"/>
    <property type="match status" value="1"/>
</dbReference>
<dbReference type="Pfam" id="PF00033">
    <property type="entry name" value="Cytochrome_B"/>
    <property type="match status" value="1"/>
</dbReference>
<dbReference type="PIRSF" id="PIRSF038885">
    <property type="entry name" value="COB"/>
    <property type="match status" value="1"/>
</dbReference>
<dbReference type="SUPFAM" id="SSF81648">
    <property type="entry name" value="a domain/subunit of cytochrome bc1 complex (Ubiquinol-cytochrome c reductase)"/>
    <property type="match status" value="1"/>
</dbReference>
<dbReference type="SUPFAM" id="SSF81342">
    <property type="entry name" value="Transmembrane di-heme cytochromes"/>
    <property type="match status" value="1"/>
</dbReference>
<dbReference type="PROSITE" id="PS51003">
    <property type="entry name" value="CYTB_CTER"/>
    <property type="match status" value="1"/>
</dbReference>
<dbReference type="PROSITE" id="PS51002">
    <property type="entry name" value="CYTB_NTER"/>
    <property type="match status" value="1"/>
</dbReference>
<accession>Q8HQF0</accession>